<sequence length="364" mass="40552">MSISIKDKKEELLCRLTDFTKLKGUGCKVPQAELLSLLDGIGEGIGYDCSISQTKFPDIVMIQTTDFFFPLVDDPYFQGKIACANVLSDLYSFGIEDCDNMLMLLACSTDMTAEQRQWSSKLMIQGFNDQAICAGSKVSGGQTVKNPWPIVGGVATSILKTNEFIKPVNAVPGDVLVLTKPLGTQVCVNFHQWLSKPERWEKINTITNAEECEQVFNYATLSMARLNRVGARLMKKYNAHAATDVTGFGILGHSTNLAQNQLLPIRFEIHTLPIIKHMKKLEDHLNHPFKLLKGTSAETSGGLLISMSRENAEAFCKEIYEIEKQPAWIIGDVIDQSSNYDRSKNTSIILENPKIIEVEPNTNF</sequence>
<gene>
    <name type="primary">selD</name>
    <name type="ORF">DDB_G0282367</name>
</gene>
<protein>
    <recommendedName>
        <fullName>Selenide, water dikinase</fullName>
        <ecNumber evidence="2">2.7.9.3</ecNumber>
    </recommendedName>
    <alternativeName>
        <fullName>Selenium donor protein</fullName>
    </alternativeName>
    <alternativeName>
        <fullName>Selenophosphate synthase</fullName>
    </alternativeName>
</protein>
<evidence type="ECO:0000250" key="1">
    <source>
        <dbReference type="UniProtKB" id="P16456"/>
    </source>
</evidence>
<evidence type="ECO:0000250" key="2">
    <source>
        <dbReference type="UniProtKB" id="P49903"/>
    </source>
</evidence>
<evidence type="ECO:0000255" key="3"/>
<evidence type="ECO:0000305" key="4"/>
<keyword id="KW-0067">ATP-binding</keyword>
<keyword id="KW-0418">Kinase</keyword>
<keyword id="KW-0460">Magnesium</keyword>
<keyword id="KW-0479">Metal-binding</keyword>
<keyword id="KW-0547">Nucleotide-binding</keyword>
<keyword id="KW-1185">Reference proteome</keyword>
<keyword id="KW-0711">Selenium</keyword>
<keyword id="KW-0712">Selenocysteine</keyword>
<keyword id="KW-0808">Transferase</keyword>
<name>SELD_DICDI</name>
<reference key="1">
    <citation type="journal article" date="2005" name="Nature">
        <title>The genome of the social amoeba Dictyostelium discoideum.</title>
        <authorList>
            <person name="Eichinger L."/>
            <person name="Pachebat J.A."/>
            <person name="Gloeckner G."/>
            <person name="Rajandream M.A."/>
            <person name="Sucgang R."/>
            <person name="Berriman M."/>
            <person name="Song J."/>
            <person name="Olsen R."/>
            <person name="Szafranski K."/>
            <person name="Xu Q."/>
            <person name="Tunggal B."/>
            <person name="Kummerfeld S."/>
            <person name="Madera M."/>
            <person name="Konfortov B.A."/>
            <person name="Rivero F."/>
            <person name="Bankier A.T."/>
            <person name="Lehmann R."/>
            <person name="Hamlin N."/>
            <person name="Davies R."/>
            <person name="Gaudet P."/>
            <person name="Fey P."/>
            <person name="Pilcher K."/>
            <person name="Chen G."/>
            <person name="Saunders D."/>
            <person name="Sodergren E.J."/>
            <person name="Davis P."/>
            <person name="Kerhornou A."/>
            <person name="Nie X."/>
            <person name="Hall N."/>
            <person name="Anjard C."/>
            <person name="Hemphill L."/>
            <person name="Bason N."/>
            <person name="Farbrother P."/>
            <person name="Desany B."/>
            <person name="Just E."/>
            <person name="Morio T."/>
            <person name="Rost R."/>
            <person name="Churcher C.M."/>
            <person name="Cooper J."/>
            <person name="Haydock S."/>
            <person name="van Driessche N."/>
            <person name="Cronin A."/>
            <person name="Goodhead I."/>
            <person name="Muzny D.M."/>
            <person name="Mourier T."/>
            <person name="Pain A."/>
            <person name="Lu M."/>
            <person name="Harper D."/>
            <person name="Lindsay R."/>
            <person name="Hauser H."/>
            <person name="James K.D."/>
            <person name="Quiles M."/>
            <person name="Madan Babu M."/>
            <person name="Saito T."/>
            <person name="Buchrieser C."/>
            <person name="Wardroper A."/>
            <person name="Felder M."/>
            <person name="Thangavelu M."/>
            <person name="Johnson D."/>
            <person name="Knights A."/>
            <person name="Loulseged H."/>
            <person name="Mungall K.L."/>
            <person name="Oliver K."/>
            <person name="Price C."/>
            <person name="Quail M.A."/>
            <person name="Urushihara H."/>
            <person name="Hernandez J."/>
            <person name="Rabbinowitsch E."/>
            <person name="Steffen D."/>
            <person name="Sanders M."/>
            <person name="Ma J."/>
            <person name="Kohara Y."/>
            <person name="Sharp S."/>
            <person name="Simmonds M.N."/>
            <person name="Spiegler S."/>
            <person name="Tivey A."/>
            <person name="Sugano S."/>
            <person name="White B."/>
            <person name="Walker D."/>
            <person name="Woodward J.R."/>
            <person name="Winckler T."/>
            <person name="Tanaka Y."/>
            <person name="Shaulsky G."/>
            <person name="Schleicher M."/>
            <person name="Weinstock G.M."/>
            <person name="Rosenthal A."/>
            <person name="Cox E.C."/>
            <person name="Chisholm R.L."/>
            <person name="Gibbs R.A."/>
            <person name="Loomis W.F."/>
            <person name="Platzer M."/>
            <person name="Kay R.R."/>
            <person name="Williams J.G."/>
            <person name="Dear P.H."/>
            <person name="Noegel A.A."/>
            <person name="Barrell B.G."/>
            <person name="Kuspa A."/>
        </authorList>
    </citation>
    <scope>NUCLEOTIDE SEQUENCE [LARGE SCALE GENOMIC DNA]</scope>
    <source>
        <strain>AX4</strain>
    </source>
</reference>
<reference key="2">
    <citation type="submission" date="1996-08" db="EMBL/GenBank/DDBJ databases">
        <title>The selD gene of Dictyostelium.</title>
        <authorList>
            <person name="Shaulsky G."/>
            <person name="Loomis W.F."/>
        </authorList>
    </citation>
    <scope>NUCLEOTIDE SEQUENCE [MRNA] OF 1-335</scope>
    <source>
        <strain>AX4</strain>
    </source>
</reference>
<organism>
    <name type="scientific">Dictyostelium discoideum</name>
    <name type="common">Social amoeba</name>
    <dbReference type="NCBI Taxonomy" id="44689"/>
    <lineage>
        <taxon>Eukaryota</taxon>
        <taxon>Amoebozoa</taxon>
        <taxon>Evosea</taxon>
        <taxon>Eumycetozoa</taxon>
        <taxon>Dictyostelia</taxon>
        <taxon>Dictyosteliales</taxon>
        <taxon>Dictyosteliaceae</taxon>
        <taxon>Dictyostelium</taxon>
    </lineage>
</organism>
<dbReference type="EC" id="2.7.9.3" evidence="2"/>
<dbReference type="EMBL" id="AAFI02000047">
    <property type="protein sequence ID" value="EAL66043.2"/>
    <property type="molecule type" value="Genomic_DNA"/>
</dbReference>
<dbReference type="EMBL" id="U68248">
    <property type="protein sequence ID" value="AAB17998.1"/>
    <property type="molecule type" value="mRNA"/>
</dbReference>
<dbReference type="RefSeq" id="XP_640038.2">
    <property type="nucleotide sequence ID" value="XM_634946.2"/>
</dbReference>
<dbReference type="FunCoup" id="Q94497">
    <property type="interactions" value="16"/>
</dbReference>
<dbReference type="STRING" id="44689.Q94497"/>
<dbReference type="PaxDb" id="44689-DDB0214887"/>
<dbReference type="EnsemblProtists" id="EAL66043">
    <property type="protein sequence ID" value="EAL66043"/>
    <property type="gene ID" value="DDB_G0282367"/>
</dbReference>
<dbReference type="GeneID" id="8623564"/>
<dbReference type="KEGG" id="ddi:DDB_G0282367"/>
<dbReference type="dictyBase" id="DDB_G0282367">
    <property type="gene designation" value="selD"/>
</dbReference>
<dbReference type="VEuPathDB" id="AmoebaDB:DDB_G0282367"/>
<dbReference type="eggNOG" id="KOG3939">
    <property type="taxonomic scope" value="Eukaryota"/>
</dbReference>
<dbReference type="HOGENOM" id="CLU_032859_1_0_1"/>
<dbReference type="InParanoid" id="Q94497"/>
<dbReference type="OMA" id="LARDWMC"/>
<dbReference type="PhylomeDB" id="Q94497"/>
<dbReference type="Reactome" id="R-DDI-2408557">
    <property type="pathway name" value="Selenocysteine synthesis"/>
</dbReference>
<dbReference type="PRO" id="PR:Q94497"/>
<dbReference type="Proteomes" id="UP000002195">
    <property type="component" value="Chromosome 3"/>
</dbReference>
<dbReference type="GO" id="GO:0005737">
    <property type="term" value="C:cytoplasm"/>
    <property type="evidence" value="ECO:0000318"/>
    <property type="project" value="GO_Central"/>
</dbReference>
<dbReference type="GO" id="GO:0005524">
    <property type="term" value="F:ATP binding"/>
    <property type="evidence" value="ECO:0007669"/>
    <property type="project" value="UniProtKB-KW"/>
</dbReference>
<dbReference type="GO" id="GO:0046872">
    <property type="term" value="F:metal ion binding"/>
    <property type="evidence" value="ECO:0007669"/>
    <property type="project" value="UniProtKB-KW"/>
</dbReference>
<dbReference type="GO" id="GO:0004756">
    <property type="term" value="F:selenide, water dikinase activity"/>
    <property type="evidence" value="ECO:0000318"/>
    <property type="project" value="GO_Central"/>
</dbReference>
<dbReference type="GO" id="GO:0016260">
    <property type="term" value="P:selenocysteine biosynthetic process"/>
    <property type="evidence" value="ECO:0000318"/>
    <property type="project" value="GO_Central"/>
</dbReference>
<dbReference type="GO" id="GO:0016259">
    <property type="term" value="P:selenocysteine metabolic process"/>
    <property type="evidence" value="ECO:0000314"/>
    <property type="project" value="dictyBase"/>
</dbReference>
<dbReference type="CDD" id="cd02195">
    <property type="entry name" value="SelD"/>
    <property type="match status" value="1"/>
</dbReference>
<dbReference type="FunFam" id="3.90.650.10:FF:000010">
    <property type="entry name" value="Selenide, water dikinase"/>
    <property type="match status" value="1"/>
</dbReference>
<dbReference type="Gene3D" id="3.90.650.10">
    <property type="entry name" value="PurM-like C-terminal domain"/>
    <property type="match status" value="1"/>
</dbReference>
<dbReference type="Gene3D" id="3.30.1330.10">
    <property type="entry name" value="PurM-like, N-terminal domain"/>
    <property type="match status" value="1"/>
</dbReference>
<dbReference type="InterPro" id="IPR010918">
    <property type="entry name" value="PurM-like_C_dom"/>
</dbReference>
<dbReference type="InterPro" id="IPR036676">
    <property type="entry name" value="PurM-like_C_sf"/>
</dbReference>
<dbReference type="InterPro" id="IPR016188">
    <property type="entry name" value="PurM-like_N"/>
</dbReference>
<dbReference type="InterPro" id="IPR036921">
    <property type="entry name" value="PurM-like_N_sf"/>
</dbReference>
<dbReference type="InterPro" id="IPR004536">
    <property type="entry name" value="SPS/SelD"/>
</dbReference>
<dbReference type="NCBIfam" id="TIGR00476">
    <property type="entry name" value="selD"/>
    <property type="match status" value="1"/>
</dbReference>
<dbReference type="PANTHER" id="PTHR10256:SF0">
    <property type="entry name" value="INACTIVE SELENIDE, WATER DIKINASE-LIKE PROTEIN-RELATED"/>
    <property type="match status" value="1"/>
</dbReference>
<dbReference type="PANTHER" id="PTHR10256">
    <property type="entry name" value="SELENIDE, WATER DIKINASE"/>
    <property type="match status" value="1"/>
</dbReference>
<dbReference type="Pfam" id="PF00586">
    <property type="entry name" value="AIRS"/>
    <property type="match status" value="1"/>
</dbReference>
<dbReference type="Pfam" id="PF02769">
    <property type="entry name" value="AIRS_C"/>
    <property type="match status" value="1"/>
</dbReference>
<dbReference type="PIRSF" id="PIRSF036407">
    <property type="entry name" value="Selenphspht_syn"/>
    <property type="match status" value="1"/>
</dbReference>
<dbReference type="SUPFAM" id="SSF56042">
    <property type="entry name" value="PurM C-terminal domain-like"/>
    <property type="match status" value="1"/>
</dbReference>
<dbReference type="SUPFAM" id="SSF55326">
    <property type="entry name" value="PurM N-terminal domain-like"/>
    <property type="match status" value="1"/>
</dbReference>
<proteinExistence type="evidence at transcript level"/>
<feature type="chain" id="PRO_0000127655" description="Selenide, water dikinase">
    <location>
        <begin position="1"/>
        <end position="364"/>
    </location>
</feature>
<feature type="active site" evidence="3">
    <location>
        <position position="25"/>
    </location>
</feature>
<feature type="binding site" description="in other chain" evidence="2">
    <location>
        <position position="28"/>
    </location>
    <ligand>
        <name>ATP</name>
        <dbReference type="ChEBI" id="CHEBI:30616"/>
        <note>ligand shared between dimeric partners</note>
    </ligand>
</feature>
<feature type="binding site" description="in other chain" evidence="2">
    <location>
        <begin position="46"/>
        <end position="48"/>
    </location>
    <ligand>
        <name>ATP</name>
        <dbReference type="ChEBI" id="CHEBI:30616"/>
        <note>ligand shared between dimeric partners</note>
    </ligand>
</feature>
<feature type="binding site" evidence="2">
    <location>
        <position position="48"/>
    </location>
    <ligand>
        <name>Mg(2+)</name>
        <dbReference type="ChEBI" id="CHEBI:18420"/>
    </ligand>
</feature>
<feature type="binding site" description="in other chain" evidence="2">
    <location>
        <position position="66"/>
    </location>
    <ligand>
        <name>ATP</name>
        <dbReference type="ChEBI" id="CHEBI:30616"/>
        <note>ligand shared between dimeric partners</note>
    </ligand>
</feature>
<feature type="binding site" description="in other chain" evidence="2">
    <location>
        <position position="89"/>
    </location>
    <ligand>
        <name>ATP</name>
        <dbReference type="ChEBI" id="CHEBI:30616"/>
        <note>ligand shared between dimeric partners</note>
    </ligand>
</feature>
<feature type="binding site" evidence="2">
    <location>
        <position position="89"/>
    </location>
    <ligand>
        <name>Mg(2+)</name>
        <dbReference type="ChEBI" id="CHEBI:18420"/>
    </ligand>
</feature>
<feature type="binding site" evidence="2">
    <location>
        <begin position="141"/>
        <end position="143"/>
    </location>
    <ligand>
        <name>ATP</name>
        <dbReference type="ChEBI" id="CHEBI:30616"/>
        <note>ligand shared between dimeric partners</note>
    </ligand>
</feature>
<feature type="binding site" evidence="2">
    <location>
        <position position="244"/>
    </location>
    <ligand>
        <name>Mg(2+)</name>
        <dbReference type="ChEBI" id="CHEBI:18420"/>
    </ligand>
</feature>
<feature type="site" description="Important for catalytic activity" evidence="1">
    <location>
        <position position="28"/>
    </location>
</feature>
<feature type="non-standard amino acid" description="Selenocysteine" evidence="4">
    <location>
        <position position="25"/>
    </location>
</feature>
<feature type="sequence conflict" description="In Ref. 2; AAB17998." evidence="4" ref="2">
    <original>U</original>
    <variation>G</variation>
    <location>
        <position position="25"/>
    </location>
</feature>
<feature type="sequence conflict" description="In Ref. 2; AAB17998." evidence="4" ref="2">
    <original>E</original>
    <variation>G</variation>
    <location>
        <position position="43"/>
    </location>
</feature>
<feature type="sequence conflict" description="In Ref. 2; AAB17998." evidence="4" ref="2">
    <original>D</original>
    <variation>DVSLKLFKNKNKLIKLYIYIYLIYIYIFFIIFLKKK</variation>
    <location>
        <position position="66"/>
    </location>
</feature>
<feature type="sequence conflict" description="In Ref. 2; AAB17998." evidence="4" ref="2">
    <original>I</original>
    <variation>K</variation>
    <location>
        <position position="124"/>
    </location>
</feature>
<feature type="sequence conflict" description="In Ref. 2; AAB17998." evidence="4" ref="2">
    <original>K</original>
    <variation>N</variation>
    <location>
        <position position="180"/>
    </location>
</feature>
<feature type="sequence conflict" description="In Ref. 2; AAB17998." evidence="4" ref="2">
    <original>V</original>
    <variation>F</variation>
    <location>
        <position position="186"/>
    </location>
</feature>
<feature type="sequence conflict" description="In Ref. 2; AAB17998." evidence="4" ref="2">
    <original>ERW</original>
    <variation>KRG</variation>
    <location>
        <begin position="198"/>
        <end position="200"/>
    </location>
</feature>
<feature type="sequence conflict" description="In Ref. 2; AAB17998." evidence="4" ref="2">
    <original>E</original>
    <variation>K</variation>
    <location>
        <position position="210"/>
    </location>
</feature>
<feature type="sequence conflict" description="In Ref. 2; AAB17998." evidence="4" ref="2">
    <original>R</original>
    <variation>K</variation>
    <location>
        <position position="225"/>
    </location>
</feature>
<feature type="sequence conflict" description="In Ref. 2; AAB17998." evidence="4" ref="2">
    <original>R</original>
    <variation>K</variation>
    <location>
        <position position="232"/>
    </location>
</feature>
<feature type="sequence conflict" description="In Ref. 2; AAB17998." evidence="4" ref="2">
    <original>K</original>
    <variation>N</variation>
    <location>
        <position position="236"/>
    </location>
</feature>
<comment type="function">
    <text evidence="2">Synthesizes selenophosphate from selenide and ATP.</text>
</comment>
<comment type="catalytic activity">
    <reaction evidence="2">
        <text>hydrogenselenide + ATP + H2O = selenophosphate + AMP + phosphate + 2 H(+)</text>
        <dbReference type="Rhea" id="RHEA:18737"/>
        <dbReference type="ChEBI" id="CHEBI:15377"/>
        <dbReference type="ChEBI" id="CHEBI:15378"/>
        <dbReference type="ChEBI" id="CHEBI:16144"/>
        <dbReference type="ChEBI" id="CHEBI:29317"/>
        <dbReference type="ChEBI" id="CHEBI:30616"/>
        <dbReference type="ChEBI" id="CHEBI:43474"/>
        <dbReference type="ChEBI" id="CHEBI:456215"/>
        <dbReference type="EC" id="2.7.9.3"/>
    </reaction>
</comment>
<comment type="cofactor">
    <cofactor evidence="2">
        <name>Mg(2+)</name>
        <dbReference type="ChEBI" id="CHEBI:18420"/>
    </cofactor>
    <text evidence="2">Binds 1 Mg(2+) ion per monomer.</text>
</comment>
<comment type="subunit">
    <text evidence="2">Homodimer.</text>
</comment>
<comment type="similarity">
    <text evidence="4">Belongs to the selenophosphate synthase 1 family. Class II subfamily.</text>
</comment>
<accession>Q94497</accession>
<accession>Q54SK1</accession>